<protein>
    <recommendedName>
        <fullName evidence="9">Tyrosinase-like protein orsC</fullName>
        <ecNumber evidence="10">1.14.-.-</ecNumber>
    </recommendedName>
    <alternativeName>
        <fullName evidence="8">Orsellinic acid/F9775 biosynthesis cluster protein C</fullName>
    </alternativeName>
</protein>
<accession>Q5AUW8</accession>
<accession>C8V4V2</accession>
<sequence>MLAFNPLVTALAALIFLFCQANANPPLMQRLVHEYQWKTKQGLPRQGACTPHNLAVRREWSTLDVETRLEYIEAVKCLARLPSIIDPELAPGARSRFDDFQATHIRHTRTIHATGSFFAWHRHFVYLYEKALREECGYTGYQPYWEWSHWANLPITANPLYDGSNASLSGNGVYIPNRNGTLQLFPIPNPSPDTAIYTPPGTGGGYIYDGPLVDWELHLGPVLYSYDNGQYIPPNPRPDGLGYNPRPLIRDFNNTLLQQGASWDIILNMLVNVTDMHEFHPLFFQGPHLAGHIFISGVDNDIFTSPGDPLFWFHHAQVDRIWTIWQALDLETREYALDGTLTLLNCKNLPFRRILAGELTVCDDSTAQP</sequence>
<feature type="signal peptide" evidence="2">
    <location>
        <begin position="1"/>
        <end position="23"/>
    </location>
</feature>
<feature type="chain" id="PRO_5007924264" description="Tyrosinase-like protein orsC" evidence="2">
    <location>
        <begin position="24"/>
        <end position="369"/>
    </location>
</feature>
<feature type="binding site" evidence="1">
    <location>
        <position position="112"/>
    </location>
    <ligand>
        <name>Cu cation</name>
        <dbReference type="ChEBI" id="CHEBI:23378"/>
        <label>A</label>
    </ligand>
</feature>
<feature type="binding site" evidence="1">
    <location>
        <position position="121"/>
    </location>
    <ligand>
        <name>Cu cation</name>
        <dbReference type="ChEBI" id="CHEBI:23378"/>
        <label>A</label>
    </ligand>
</feature>
<feature type="binding site" evidence="1">
    <location>
        <position position="315"/>
    </location>
    <ligand>
        <name>Cu cation</name>
        <dbReference type="ChEBI" id="CHEBI:23378"/>
        <label>B</label>
    </ligand>
</feature>
<feature type="glycosylation site" description="N-linked (GlcNAc...) asparagine" evidence="3">
    <location>
        <position position="165"/>
    </location>
</feature>
<feature type="glycosylation site" description="N-linked (GlcNAc...) asparagine" evidence="3">
    <location>
        <position position="179"/>
    </location>
</feature>
<feature type="glycosylation site" description="N-linked (GlcNAc...) asparagine" evidence="3">
    <location>
        <position position="253"/>
    </location>
</feature>
<feature type="glycosylation site" description="N-linked (GlcNAc...) asparagine" evidence="3">
    <location>
        <position position="272"/>
    </location>
</feature>
<gene>
    <name evidence="8" type="primary">orsC</name>
    <name type="ORF">AN7912</name>
</gene>
<dbReference type="EC" id="1.14.-.-" evidence="10"/>
<dbReference type="EMBL" id="BN001302">
    <property type="protein sequence ID" value="CBF73509.1"/>
    <property type="molecule type" value="Genomic_DNA"/>
</dbReference>
<dbReference type="EMBL" id="AACD01000135">
    <property type="protein sequence ID" value="EAA59566.1"/>
    <property type="molecule type" value="Genomic_DNA"/>
</dbReference>
<dbReference type="RefSeq" id="XP_681181.1">
    <property type="nucleotide sequence ID" value="XM_676089.1"/>
</dbReference>
<dbReference type="SMR" id="Q5AUW8"/>
<dbReference type="STRING" id="227321.Q5AUW8"/>
<dbReference type="GlyCosmos" id="Q5AUW8">
    <property type="glycosylation" value="4 sites, No reported glycans"/>
</dbReference>
<dbReference type="EnsemblFungi" id="CBF73509">
    <property type="protein sequence ID" value="CBF73509"/>
    <property type="gene ID" value="ANIA_07912"/>
</dbReference>
<dbReference type="KEGG" id="ani:ANIA_07912"/>
<dbReference type="eggNOG" id="ENOG502RM4B">
    <property type="taxonomic scope" value="Eukaryota"/>
</dbReference>
<dbReference type="HOGENOM" id="CLU_035914_0_1_1"/>
<dbReference type="InParanoid" id="Q5AUW8"/>
<dbReference type="OMA" id="FHHAQVD"/>
<dbReference type="OrthoDB" id="6132182at2759"/>
<dbReference type="Proteomes" id="UP000000560">
    <property type="component" value="Chromosome II"/>
</dbReference>
<dbReference type="GO" id="GO:0046872">
    <property type="term" value="F:metal ion binding"/>
    <property type="evidence" value="ECO:0007669"/>
    <property type="project" value="UniProtKB-KW"/>
</dbReference>
<dbReference type="GO" id="GO:0004497">
    <property type="term" value="F:monooxygenase activity"/>
    <property type="evidence" value="ECO:0007669"/>
    <property type="project" value="UniProtKB-KW"/>
</dbReference>
<dbReference type="Gene3D" id="1.10.1280.10">
    <property type="entry name" value="Di-copper center containing domain from catechol oxidase"/>
    <property type="match status" value="1"/>
</dbReference>
<dbReference type="InterPro" id="IPR008922">
    <property type="entry name" value="Di-copper_centre_dom_sf"/>
</dbReference>
<dbReference type="InterPro" id="IPR050316">
    <property type="entry name" value="Tyrosinase/Hemocyanin"/>
</dbReference>
<dbReference type="InterPro" id="IPR002227">
    <property type="entry name" value="Tyrosinase_Cu-bd"/>
</dbReference>
<dbReference type="PANTHER" id="PTHR11474:SF125">
    <property type="entry name" value="N-ACETYL-6-HYDROXYTRYPTOPHAN OXIDASE IVOB-RELATED"/>
    <property type="match status" value="1"/>
</dbReference>
<dbReference type="PANTHER" id="PTHR11474">
    <property type="entry name" value="TYROSINASE FAMILY MEMBER"/>
    <property type="match status" value="1"/>
</dbReference>
<dbReference type="Pfam" id="PF00264">
    <property type="entry name" value="Tyrosinase"/>
    <property type="match status" value="1"/>
</dbReference>
<dbReference type="PRINTS" id="PR00092">
    <property type="entry name" value="TYROSINASE"/>
</dbReference>
<dbReference type="SUPFAM" id="SSF48056">
    <property type="entry name" value="Di-copper centre-containing domain"/>
    <property type="match status" value="1"/>
</dbReference>
<dbReference type="PROSITE" id="PS00497">
    <property type="entry name" value="TYROSINASE_1"/>
    <property type="match status" value="1"/>
</dbReference>
<dbReference type="PROSITE" id="PS00498">
    <property type="entry name" value="TYROSINASE_2"/>
    <property type="match status" value="1"/>
</dbReference>
<evidence type="ECO:0000250" key="1">
    <source>
        <dbReference type="UniProtKB" id="P06845"/>
    </source>
</evidence>
<evidence type="ECO:0000255" key="2"/>
<evidence type="ECO:0000255" key="3">
    <source>
        <dbReference type="PROSITE-ProRule" id="PRU00498"/>
    </source>
</evidence>
<evidence type="ECO:0000269" key="4">
    <source>
    </source>
</evidence>
<evidence type="ECO:0000269" key="5">
    <source>
    </source>
</evidence>
<evidence type="ECO:0000269" key="6">
    <source>
    </source>
</evidence>
<evidence type="ECO:0000269" key="7">
    <source>
    </source>
</evidence>
<evidence type="ECO:0000303" key="8">
    <source>
    </source>
</evidence>
<evidence type="ECO:0000303" key="9">
    <source>
    </source>
</evidence>
<evidence type="ECO:0000305" key="10">
    <source>
    </source>
</evidence>
<comment type="function">
    <text evidence="4 5">Tyrosinase-like protein; part of the gene cluster that mediates the biosynthesis of orsellinic acid, as well as of the cathepsin K inhibitors F9775 A and F9775 B (PubMed:19666480, PubMed:20174687). The non-reducing polyketide synthase orsA produces orsellinic acid by condensing acetyl-CoA with 3 malonyl-CoA units (PubMed:19666480, PubMed:20174687). Further modifications by the decarboxylase orsB and the tyrosinase-like protein orsC lead to the production of F9775 A and F9775 B (PubMed:20174687). The functions of orsD and orsE remain unclear since only orsB and orsC are required to convert orsellinic acid into F9775 A and F9775 B (PubMed:20174687).</text>
</comment>
<comment type="pathway">
    <text evidence="5">Secondary metabolite biosynthesis.</text>
</comment>
<comment type="induction">
    <text evidence="4 6 7">Expression is induced by an intimate physical interaction of the fungal mycelia with the bacterium Streptomyces hygroscopicus (PubMed:19666480). Expression is repressed by VeA and MvlA via histone 3 acetylation by the SAGA/ADA complex (PubMed:23841751, PubMed:23892751).</text>
</comment>
<comment type="disruption phenotype">
    <text evidence="5">Fails to produce F9775 A and B, but accumulates diorcinol and continues to yield orsellinic acid (PubMed:20174687).</text>
</comment>
<reference key="1">
    <citation type="journal article" date="2005" name="Nature">
        <title>Sequencing of Aspergillus nidulans and comparative analysis with A. fumigatus and A. oryzae.</title>
        <authorList>
            <person name="Galagan J.E."/>
            <person name="Calvo S.E."/>
            <person name="Cuomo C."/>
            <person name="Ma L.-J."/>
            <person name="Wortman J.R."/>
            <person name="Batzoglou S."/>
            <person name="Lee S.-I."/>
            <person name="Bastuerkmen M."/>
            <person name="Spevak C.C."/>
            <person name="Clutterbuck J."/>
            <person name="Kapitonov V."/>
            <person name="Jurka J."/>
            <person name="Scazzocchio C."/>
            <person name="Farman M.L."/>
            <person name="Butler J."/>
            <person name="Purcell S."/>
            <person name="Harris S."/>
            <person name="Braus G.H."/>
            <person name="Draht O."/>
            <person name="Busch S."/>
            <person name="D'Enfert C."/>
            <person name="Bouchier C."/>
            <person name="Goldman G.H."/>
            <person name="Bell-Pedersen D."/>
            <person name="Griffiths-Jones S."/>
            <person name="Doonan J.H."/>
            <person name="Yu J."/>
            <person name="Vienken K."/>
            <person name="Pain A."/>
            <person name="Freitag M."/>
            <person name="Selker E.U."/>
            <person name="Archer D.B."/>
            <person name="Penalva M.A."/>
            <person name="Oakley B.R."/>
            <person name="Momany M."/>
            <person name="Tanaka T."/>
            <person name="Kumagai T."/>
            <person name="Asai K."/>
            <person name="Machida M."/>
            <person name="Nierman W.C."/>
            <person name="Denning D.W."/>
            <person name="Caddick M.X."/>
            <person name="Hynes M."/>
            <person name="Paoletti M."/>
            <person name="Fischer R."/>
            <person name="Miller B.L."/>
            <person name="Dyer P.S."/>
            <person name="Sachs M.S."/>
            <person name="Osmani S.A."/>
            <person name="Birren B.W."/>
        </authorList>
    </citation>
    <scope>NUCLEOTIDE SEQUENCE [LARGE SCALE GENOMIC DNA]</scope>
    <source>
        <strain>FGSC A4 / ATCC 38163 / CBS 112.46 / NRRL 194 / M139</strain>
    </source>
</reference>
<reference key="2">
    <citation type="journal article" date="2009" name="Fungal Genet. Biol.">
        <title>The 2008 update of the Aspergillus nidulans genome annotation: a community effort.</title>
        <authorList>
            <person name="Wortman J.R."/>
            <person name="Gilsenan J.M."/>
            <person name="Joardar V."/>
            <person name="Deegan J."/>
            <person name="Clutterbuck J."/>
            <person name="Andersen M.R."/>
            <person name="Archer D."/>
            <person name="Bencina M."/>
            <person name="Braus G."/>
            <person name="Coutinho P."/>
            <person name="von Dohren H."/>
            <person name="Doonan J."/>
            <person name="Driessen A.J."/>
            <person name="Durek P."/>
            <person name="Espeso E."/>
            <person name="Fekete E."/>
            <person name="Flipphi M."/>
            <person name="Estrada C.G."/>
            <person name="Geysens S."/>
            <person name="Goldman G."/>
            <person name="de Groot P.W."/>
            <person name="Hansen K."/>
            <person name="Harris S.D."/>
            <person name="Heinekamp T."/>
            <person name="Helmstaedt K."/>
            <person name="Henrissat B."/>
            <person name="Hofmann G."/>
            <person name="Homan T."/>
            <person name="Horio T."/>
            <person name="Horiuchi H."/>
            <person name="James S."/>
            <person name="Jones M."/>
            <person name="Karaffa L."/>
            <person name="Karanyi Z."/>
            <person name="Kato M."/>
            <person name="Keller N."/>
            <person name="Kelly D.E."/>
            <person name="Kiel J.A."/>
            <person name="Kim J.M."/>
            <person name="van der Klei I.J."/>
            <person name="Klis F.M."/>
            <person name="Kovalchuk A."/>
            <person name="Krasevec N."/>
            <person name="Kubicek C.P."/>
            <person name="Liu B."/>
            <person name="Maccabe A."/>
            <person name="Meyer V."/>
            <person name="Mirabito P."/>
            <person name="Miskei M."/>
            <person name="Mos M."/>
            <person name="Mullins J."/>
            <person name="Nelson D.R."/>
            <person name="Nielsen J."/>
            <person name="Oakley B.R."/>
            <person name="Osmani S.A."/>
            <person name="Pakula T."/>
            <person name="Paszewski A."/>
            <person name="Paulsen I."/>
            <person name="Pilsyk S."/>
            <person name="Pocsi I."/>
            <person name="Punt P.J."/>
            <person name="Ram A.F."/>
            <person name="Ren Q."/>
            <person name="Robellet X."/>
            <person name="Robson G."/>
            <person name="Seiboth B."/>
            <person name="van Solingen P."/>
            <person name="Specht T."/>
            <person name="Sun J."/>
            <person name="Taheri-Talesh N."/>
            <person name="Takeshita N."/>
            <person name="Ussery D."/>
            <person name="vanKuyk P.A."/>
            <person name="Visser H."/>
            <person name="van de Vondervoort P.J."/>
            <person name="de Vries R.P."/>
            <person name="Walton J."/>
            <person name="Xiang X."/>
            <person name="Xiong Y."/>
            <person name="Zeng A.P."/>
            <person name="Brandt B.W."/>
            <person name="Cornell M.J."/>
            <person name="van den Hondel C.A."/>
            <person name="Visser J."/>
            <person name="Oliver S.G."/>
            <person name="Turner G."/>
        </authorList>
    </citation>
    <scope>GENOME REANNOTATION</scope>
    <source>
        <strain>FGSC A4 / ATCC 38163 / CBS 112.46 / NRRL 194 / M139</strain>
    </source>
</reference>
<reference key="3">
    <citation type="journal article" date="2009" name="Proc. Natl. Acad. Sci. U.S.A.">
        <title>Intimate bacterial-fungal interaction triggers biosynthesis of archetypal polyketides in Aspergillus nidulans.</title>
        <authorList>
            <person name="Schroeckh V."/>
            <person name="Scherlach K."/>
            <person name="Nuetzmann H.W."/>
            <person name="Shelest E."/>
            <person name="Schmidt-Heck W."/>
            <person name="Schuemann J."/>
            <person name="Martin K."/>
            <person name="Hertweck C."/>
            <person name="Brakhage A.A."/>
        </authorList>
    </citation>
    <scope>IDENTIFICATION OF THE ORS CLUSTER</scope>
    <scope>FUNCTION</scope>
    <scope>INDUCTION</scope>
</reference>
<reference key="4">
    <citation type="journal article" date="2010" name="Mol. Biosyst.">
        <title>Molecular genetic analysis of the orsellinic acid/F9775 gene cluster of Aspergillus nidulans.</title>
        <authorList>
            <person name="Sanchez J.F."/>
            <person name="Chiang Y.M."/>
            <person name="Szewczyk E."/>
            <person name="Davidson A.D."/>
            <person name="Ahuja M."/>
            <person name="Elizabeth Oakley C."/>
            <person name="Woo Bok J."/>
            <person name="Keller N."/>
            <person name="Oakley B.R."/>
            <person name="Wang C.C."/>
        </authorList>
    </citation>
    <scope>FUNCTION</scope>
    <scope>DISRUPTION PHENOTYPE</scope>
    <scope>PATHWAY</scope>
</reference>
<reference key="5">
    <citation type="journal article" date="2013" name="Appl. Environ. Microbiol.">
        <title>Distinct amino acids of histone H3 control secondary metabolism in Aspergillus nidulans.</title>
        <authorList>
            <person name="Nuetzmann H.W."/>
            <person name="Fischer J."/>
            <person name="Scherlach K."/>
            <person name="Hertweck C."/>
            <person name="Brakhage A.A."/>
        </authorList>
    </citation>
    <scope>INDUCTION</scope>
</reference>
<reference key="6">
    <citation type="journal article" date="2013" name="Mol. Microbiol.">
        <title>VeA and MvlA repression of the cryptic orsellinic acid gene cluster in Aspergillus nidulans involves histone 3 acetylation.</title>
        <authorList>
            <person name="Bok J.W."/>
            <person name="Soukup A.A."/>
            <person name="Chadwick E."/>
            <person name="Chiang Y.M."/>
            <person name="Wang C.C."/>
            <person name="Keller N.P."/>
        </authorList>
    </citation>
    <scope>INDUCTION</scope>
</reference>
<organism>
    <name type="scientific">Emericella nidulans (strain FGSC A4 / ATCC 38163 / CBS 112.46 / NRRL 194 / M139)</name>
    <name type="common">Aspergillus nidulans</name>
    <dbReference type="NCBI Taxonomy" id="227321"/>
    <lineage>
        <taxon>Eukaryota</taxon>
        <taxon>Fungi</taxon>
        <taxon>Dikarya</taxon>
        <taxon>Ascomycota</taxon>
        <taxon>Pezizomycotina</taxon>
        <taxon>Eurotiomycetes</taxon>
        <taxon>Eurotiomycetidae</taxon>
        <taxon>Eurotiales</taxon>
        <taxon>Aspergillaceae</taxon>
        <taxon>Aspergillus</taxon>
        <taxon>Aspergillus subgen. Nidulantes</taxon>
    </lineage>
</organism>
<proteinExistence type="evidence at transcript level"/>
<keyword id="KW-0186">Copper</keyword>
<keyword id="KW-0325">Glycoprotein</keyword>
<keyword id="KW-0479">Metal-binding</keyword>
<keyword id="KW-0503">Monooxygenase</keyword>
<keyword id="KW-0560">Oxidoreductase</keyword>
<keyword id="KW-1185">Reference proteome</keyword>
<keyword id="KW-0732">Signal</keyword>
<name>ORSC_EMENI</name>